<accession>Q032G8</accession>
<evidence type="ECO:0000255" key="1">
    <source>
        <dbReference type="HAMAP-Rule" id="MF_01692"/>
    </source>
</evidence>
<sequence>MINLIEIRRQLHQIPEIGLEEHKTQKYLLTIIHQIIQNKSFIQVETWQTGILVYLKGSQGQKTIGWRTDIDGLPVEELTNLPFASKNGRMHACGHDIHMTVALGLLEKLSESQPKNNLLFLFQPAEENEAGGKLMYDGGAFKNWLPDEFYGLHVRPDLKVGDIATNEQTLFAGTCEVELTFVGTGGHAAFPHTANDALVAAAYFVTQVQTIVSRNVDPLDSAVVTFGKMEAGTTNNIIAERAFLHGTIRSLTQEVNELTQKRLTELAKGVAQSFDMTIDLKLKQGGYLPVENNPKLAKELMDFFRNETKANLIDIAPAMTGEDFGYLLSKIPGVMFWLGINSEAPLHSQKMQADEEVLDFAVEAIGQFLDFKANRN</sequence>
<name>DAPEL_LACLS</name>
<feature type="chain" id="PRO_0000376767" description="N-acetyldiaminopimelate deacetylase">
    <location>
        <begin position="1"/>
        <end position="376"/>
    </location>
</feature>
<feature type="active site" evidence="1">
    <location>
        <position position="69"/>
    </location>
</feature>
<feature type="active site" description="Proton acceptor" evidence="1">
    <location>
        <position position="127"/>
    </location>
</feature>
<dbReference type="EC" id="3.5.1.47" evidence="1"/>
<dbReference type="EMBL" id="CP000425">
    <property type="protein sequence ID" value="ABJ71904.1"/>
    <property type="molecule type" value="Genomic_DNA"/>
</dbReference>
<dbReference type="RefSeq" id="WP_011675316.1">
    <property type="nucleotide sequence ID" value="NC_008527.1"/>
</dbReference>
<dbReference type="SMR" id="Q032G8"/>
<dbReference type="KEGG" id="llc:LACR_0294"/>
<dbReference type="HOGENOM" id="CLU_023257_0_1_9"/>
<dbReference type="UniPathway" id="UPA00034">
    <property type="reaction ID" value="UER00024"/>
</dbReference>
<dbReference type="Proteomes" id="UP000000240">
    <property type="component" value="Chromosome"/>
</dbReference>
<dbReference type="GO" id="GO:0050118">
    <property type="term" value="F:N-acetyldiaminopimelate deacetylase activity"/>
    <property type="evidence" value="ECO:0007669"/>
    <property type="project" value="UniProtKB-UniRule"/>
</dbReference>
<dbReference type="GO" id="GO:0019877">
    <property type="term" value="P:diaminopimelate biosynthetic process"/>
    <property type="evidence" value="ECO:0007669"/>
    <property type="project" value="UniProtKB-UniRule"/>
</dbReference>
<dbReference type="GO" id="GO:0009089">
    <property type="term" value="P:lysine biosynthetic process via diaminopimelate"/>
    <property type="evidence" value="ECO:0007669"/>
    <property type="project" value="UniProtKB-UniRule"/>
</dbReference>
<dbReference type="CDD" id="cd05670">
    <property type="entry name" value="M20_Acy1_YkuR-like"/>
    <property type="match status" value="1"/>
</dbReference>
<dbReference type="FunFam" id="3.30.70.360:FF:000001">
    <property type="entry name" value="N-acetyldiaminopimelate deacetylase"/>
    <property type="match status" value="1"/>
</dbReference>
<dbReference type="Gene3D" id="3.30.70.360">
    <property type="match status" value="1"/>
</dbReference>
<dbReference type="Gene3D" id="3.40.630.10">
    <property type="entry name" value="Zn peptidases"/>
    <property type="match status" value="1"/>
</dbReference>
<dbReference type="HAMAP" id="MF_01692">
    <property type="entry name" value="DapEL"/>
    <property type="match status" value="1"/>
</dbReference>
<dbReference type="InterPro" id="IPR023905">
    <property type="entry name" value="AcetylDAP_deacetylase"/>
</dbReference>
<dbReference type="InterPro" id="IPR017439">
    <property type="entry name" value="Amidohydrolase"/>
</dbReference>
<dbReference type="InterPro" id="IPR036264">
    <property type="entry name" value="Bact_exopeptidase_dim_dom"/>
</dbReference>
<dbReference type="InterPro" id="IPR002933">
    <property type="entry name" value="Peptidase_M20"/>
</dbReference>
<dbReference type="InterPro" id="IPR011650">
    <property type="entry name" value="Peptidase_M20_dimer"/>
</dbReference>
<dbReference type="NCBIfam" id="TIGR01891">
    <property type="entry name" value="amidohydrolases"/>
    <property type="match status" value="1"/>
</dbReference>
<dbReference type="PANTHER" id="PTHR11014:SF98">
    <property type="entry name" value="N-ACETYLDIAMINOPIMELATE DEACETYLASE"/>
    <property type="match status" value="1"/>
</dbReference>
<dbReference type="PANTHER" id="PTHR11014">
    <property type="entry name" value="PEPTIDASE M20 FAMILY MEMBER"/>
    <property type="match status" value="1"/>
</dbReference>
<dbReference type="Pfam" id="PF07687">
    <property type="entry name" value="M20_dimer"/>
    <property type="match status" value="1"/>
</dbReference>
<dbReference type="Pfam" id="PF01546">
    <property type="entry name" value="Peptidase_M20"/>
    <property type="match status" value="1"/>
</dbReference>
<dbReference type="PIRSF" id="PIRSF005962">
    <property type="entry name" value="Pept_M20D_amidohydro"/>
    <property type="match status" value="1"/>
</dbReference>
<dbReference type="SUPFAM" id="SSF55031">
    <property type="entry name" value="Bacterial exopeptidase dimerisation domain"/>
    <property type="match status" value="1"/>
</dbReference>
<dbReference type="SUPFAM" id="SSF53187">
    <property type="entry name" value="Zn-dependent exopeptidases"/>
    <property type="match status" value="1"/>
</dbReference>
<comment type="function">
    <text evidence="1">Catalyzes the conversion of N-acetyl-diaminopimelate to diaminopimelate and acetate.</text>
</comment>
<comment type="catalytic activity">
    <reaction evidence="1">
        <text>N-acetyl-(2S,6S)-2,6-diaminopimelate + H2O = (2S,6S)-2,6-diaminopimelate + acetate</text>
        <dbReference type="Rhea" id="RHEA:20405"/>
        <dbReference type="ChEBI" id="CHEBI:15377"/>
        <dbReference type="ChEBI" id="CHEBI:30089"/>
        <dbReference type="ChEBI" id="CHEBI:57609"/>
        <dbReference type="ChEBI" id="CHEBI:58767"/>
        <dbReference type="EC" id="3.5.1.47"/>
    </reaction>
</comment>
<comment type="pathway">
    <text evidence="1">Amino-acid biosynthesis; L-lysine biosynthesis via DAP pathway; LL-2,6-diaminopimelate from (S)-tetrahydrodipicolinate (acetylase route): step 3/3.</text>
</comment>
<comment type="similarity">
    <text evidence="1">Belongs to the peptidase M20A family. N-acetyldiaminopimelate deacetylase subfamily.</text>
</comment>
<proteinExistence type="inferred from homology"/>
<reference key="1">
    <citation type="journal article" date="2006" name="Proc. Natl. Acad. Sci. U.S.A.">
        <title>Comparative genomics of the lactic acid bacteria.</title>
        <authorList>
            <person name="Makarova K.S."/>
            <person name="Slesarev A."/>
            <person name="Wolf Y.I."/>
            <person name="Sorokin A."/>
            <person name="Mirkin B."/>
            <person name="Koonin E.V."/>
            <person name="Pavlov A."/>
            <person name="Pavlova N."/>
            <person name="Karamychev V."/>
            <person name="Polouchine N."/>
            <person name="Shakhova V."/>
            <person name="Grigoriev I."/>
            <person name="Lou Y."/>
            <person name="Rohksar D."/>
            <person name="Lucas S."/>
            <person name="Huang K."/>
            <person name="Goodstein D.M."/>
            <person name="Hawkins T."/>
            <person name="Plengvidhya V."/>
            <person name="Welker D."/>
            <person name="Hughes J."/>
            <person name="Goh Y."/>
            <person name="Benson A."/>
            <person name="Baldwin K."/>
            <person name="Lee J.-H."/>
            <person name="Diaz-Muniz I."/>
            <person name="Dosti B."/>
            <person name="Smeianov V."/>
            <person name="Wechter W."/>
            <person name="Barabote R."/>
            <person name="Lorca G."/>
            <person name="Altermann E."/>
            <person name="Barrangou R."/>
            <person name="Ganesan B."/>
            <person name="Xie Y."/>
            <person name="Rawsthorne H."/>
            <person name="Tamir D."/>
            <person name="Parker C."/>
            <person name="Breidt F."/>
            <person name="Broadbent J.R."/>
            <person name="Hutkins R."/>
            <person name="O'Sullivan D."/>
            <person name="Steele J."/>
            <person name="Unlu G."/>
            <person name="Saier M.H. Jr."/>
            <person name="Klaenhammer T."/>
            <person name="Richardson P."/>
            <person name="Kozyavkin S."/>
            <person name="Weimer B.C."/>
            <person name="Mills D.A."/>
        </authorList>
    </citation>
    <scope>NUCLEOTIDE SEQUENCE [LARGE SCALE GENOMIC DNA]</scope>
    <source>
        <strain>SK11</strain>
    </source>
</reference>
<organism>
    <name type="scientific">Lactococcus lactis subsp. cremoris (strain SK11)</name>
    <dbReference type="NCBI Taxonomy" id="272622"/>
    <lineage>
        <taxon>Bacteria</taxon>
        <taxon>Bacillati</taxon>
        <taxon>Bacillota</taxon>
        <taxon>Bacilli</taxon>
        <taxon>Lactobacillales</taxon>
        <taxon>Streptococcaceae</taxon>
        <taxon>Lactococcus</taxon>
        <taxon>Lactococcus cremoris subsp. cremoris</taxon>
    </lineage>
</organism>
<gene>
    <name type="ordered locus">LACR_0294</name>
</gene>
<keyword id="KW-0028">Amino-acid biosynthesis</keyword>
<keyword id="KW-0220">Diaminopimelate biosynthesis</keyword>
<keyword id="KW-0378">Hydrolase</keyword>
<keyword id="KW-0457">Lysine biosynthesis</keyword>
<protein>
    <recommendedName>
        <fullName evidence="1">N-acetyldiaminopimelate deacetylase</fullName>
        <ecNumber evidence="1">3.5.1.47</ecNumber>
    </recommendedName>
</protein>